<dbReference type="EMBL" id="CP000868">
    <property type="protein sequence ID" value="ABX14471.1"/>
    <property type="molecule type" value="Genomic_DNA"/>
</dbReference>
<dbReference type="EMBL" id="AP009385">
    <property type="protein sequence ID" value="BAG44375.1"/>
    <property type="molecule type" value="Genomic_DNA"/>
</dbReference>
<dbReference type="RefSeq" id="WP_006398529.1">
    <property type="nucleotide sequence ID" value="NC_010804.1"/>
</dbReference>
<dbReference type="SMR" id="A9AGM9"/>
<dbReference type="STRING" id="395019.BMULJ_02484"/>
<dbReference type="GeneID" id="98107640"/>
<dbReference type="KEGG" id="bmj:BMULJ_02484"/>
<dbReference type="KEGG" id="bmu:Bmul_0776"/>
<dbReference type="eggNOG" id="COG2127">
    <property type="taxonomic scope" value="Bacteria"/>
</dbReference>
<dbReference type="HOGENOM" id="CLU_134358_0_0_4"/>
<dbReference type="Proteomes" id="UP000008815">
    <property type="component" value="Chromosome 1"/>
</dbReference>
<dbReference type="GO" id="GO:0030163">
    <property type="term" value="P:protein catabolic process"/>
    <property type="evidence" value="ECO:0007669"/>
    <property type="project" value="InterPro"/>
</dbReference>
<dbReference type="GO" id="GO:0006508">
    <property type="term" value="P:proteolysis"/>
    <property type="evidence" value="ECO:0007669"/>
    <property type="project" value="UniProtKB-UniRule"/>
</dbReference>
<dbReference type="FunFam" id="3.30.1390.10:FF:000002">
    <property type="entry name" value="ATP-dependent Clp protease adapter protein ClpS"/>
    <property type="match status" value="1"/>
</dbReference>
<dbReference type="Gene3D" id="3.30.1390.10">
    <property type="match status" value="1"/>
</dbReference>
<dbReference type="HAMAP" id="MF_00302">
    <property type="entry name" value="ClpS"/>
    <property type="match status" value="1"/>
</dbReference>
<dbReference type="InterPro" id="IPR022935">
    <property type="entry name" value="ClpS"/>
</dbReference>
<dbReference type="InterPro" id="IPR003769">
    <property type="entry name" value="ClpS_core"/>
</dbReference>
<dbReference type="InterPro" id="IPR014719">
    <property type="entry name" value="Ribosomal_bL12_C/ClpS-like"/>
</dbReference>
<dbReference type="NCBIfam" id="NF000672">
    <property type="entry name" value="PRK00033.1-5"/>
    <property type="match status" value="1"/>
</dbReference>
<dbReference type="PANTHER" id="PTHR33473:SF19">
    <property type="entry name" value="ATP-DEPENDENT CLP PROTEASE ADAPTER PROTEIN CLPS"/>
    <property type="match status" value="1"/>
</dbReference>
<dbReference type="PANTHER" id="PTHR33473">
    <property type="entry name" value="ATP-DEPENDENT CLP PROTEASE ADAPTER PROTEIN CLPS1, CHLOROPLASTIC"/>
    <property type="match status" value="1"/>
</dbReference>
<dbReference type="Pfam" id="PF02617">
    <property type="entry name" value="ClpS"/>
    <property type="match status" value="1"/>
</dbReference>
<dbReference type="SUPFAM" id="SSF54736">
    <property type="entry name" value="ClpS-like"/>
    <property type="match status" value="1"/>
</dbReference>
<evidence type="ECO:0000255" key="1">
    <source>
        <dbReference type="HAMAP-Rule" id="MF_00302"/>
    </source>
</evidence>
<gene>
    <name evidence="1" type="primary">clpS</name>
    <name type="ordered locus">Bmul_0776</name>
    <name type="ordered locus">BMULJ_02484</name>
</gene>
<accession>A9AGM9</accession>
<comment type="function">
    <text evidence="1">Involved in the modulation of the specificity of the ClpAP-mediated ATP-dependent protein degradation.</text>
</comment>
<comment type="subunit">
    <text evidence="1">Binds to the N-terminal domain of the chaperone ClpA.</text>
</comment>
<comment type="similarity">
    <text evidence="1">Belongs to the ClpS family.</text>
</comment>
<name>CLPS_BURM1</name>
<sequence length="104" mass="11936">MAIIPDKQDSTVLERKQQKLKPPSMYKVVLLNDDFTPMEFVVMVVQEYFKKDRETATQIMLKVHREGRGVCGVYTRDIASTKVEQVVTHARQAGHPLQCVMEEA</sequence>
<keyword id="KW-1185">Reference proteome</keyword>
<proteinExistence type="inferred from homology"/>
<reference key="1">
    <citation type="submission" date="2007-10" db="EMBL/GenBank/DDBJ databases">
        <title>Complete sequence of chromosome 1 of Burkholderia multivorans ATCC 17616.</title>
        <authorList>
            <person name="Copeland A."/>
            <person name="Lucas S."/>
            <person name="Lapidus A."/>
            <person name="Barry K."/>
            <person name="Glavina del Rio T."/>
            <person name="Dalin E."/>
            <person name="Tice H."/>
            <person name="Pitluck S."/>
            <person name="Chain P."/>
            <person name="Malfatti S."/>
            <person name="Shin M."/>
            <person name="Vergez L."/>
            <person name="Schmutz J."/>
            <person name="Larimer F."/>
            <person name="Land M."/>
            <person name="Hauser L."/>
            <person name="Kyrpides N."/>
            <person name="Kim E."/>
            <person name="Tiedje J."/>
            <person name="Richardson P."/>
        </authorList>
    </citation>
    <scope>NUCLEOTIDE SEQUENCE [LARGE SCALE GENOMIC DNA]</scope>
    <source>
        <strain>ATCC 17616 / 249</strain>
    </source>
</reference>
<reference key="2">
    <citation type="submission" date="2007-04" db="EMBL/GenBank/DDBJ databases">
        <title>Complete genome sequence of Burkholderia multivorans ATCC 17616.</title>
        <authorList>
            <person name="Ohtsubo Y."/>
            <person name="Yamashita A."/>
            <person name="Kurokawa K."/>
            <person name="Takami H."/>
            <person name="Yuhara S."/>
            <person name="Nishiyama E."/>
            <person name="Endo R."/>
            <person name="Miyazaki R."/>
            <person name="Ono A."/>
            <person name="Yano K."/>
            <person name="Ito M."/>
            <person name="Sota M."/>
            <person name="Yuji N."/>
            <person name="Hattori M."/>
            <person name="Tsuda M."/>
        </authorList>
    </citation>
    <scope>NUCLEOTIDE SEQUENCE [LARGE SCALE GENOMIC DNA]</scope>
    <source>
        <strain>ATCC 17616 / 249</strain>
    </source>
</reference>
<feature type="chain" id="PRO_1000115450" description="ATP-dependent Clp protease adapter protein ClpS">
    <location>
        <begin position="1"/>
        <end position="104"/>
    </location>
</feature>
<organism>
    <name type="scientific">Burkholderia multivorans (strain ATCC 17616 / 249)</name>
    <dbReference type="NCBI Taxonomy" id="395019"/>
    <lineage>
        <taxon>Bacteria</taxon>
        <taxon>Pseudomonadati</taxon>
        <taxon>Pseudomonadota</taxon>
        <taxon>Betaproteobacteria</taxon>
        <taxon>Burkholderiales</taxon>
        <taxon>Burkholderiaceae</taxon>
        <taxon>Burkholderia</taxon>
        <taxon>Burkholderia cepacia complex</taxon>
    </lineage>
</organism>
<protein>
    <recommendedName>
        <fullName evidence="1">ATP-dependent Clp protease adapter protein ClpS</fullName>
    </recommendedName>
</protein>